<comment type="function">
    <text evidence="1">Involved in transcription antitermination. Required for transcription of ribosomal RNA (rRNA) genes. Binds specifically to the boxA antiterminator sequence of the ribosomal RNA (rrn) operons.</text>
</comment>
<comment type="similarity">
    <text evidence="1">Belongs to the NusB family.</text>
</comment>
<protein>
    <recommendedName>
        <fullName evidence="1">Transcription antitermination protein NusB</fullName>
    </recommendedName>
    <alternativeName>
        <fullName evidence="1">Antitermination factor NusB</fullName>
    </alternativeName>
</protein>
<sequence>MKTYRRQIREKILQALYTIELRDTDIDSAAGWLLTQEILDDPNAMKFFNMLIGSIKAHMSEIDCYIERHTFNWDMSRIAIIDKNILRMALAEILYCEDIPPKVSINEAIEIAKKFSSTEKSSKFVNGILDAIFNELKTDGKIHKNGRGLIDHSTAKLHKNETSK</sequence>
<dbReference type="EMBL" id="CP001097">
    <property type="protein sequence ID" value="ACD91020.1"/>
    <property type="molecule type" value="Genomic_DNA"/>
</dbReference>
<dbReference type="RefSeq" id="WP_012466889.1">
    <property type="nucleotide sequence ID" value="NC_010803.1"/>
</dbReference>
<dbReference type="SMR" id="B3EFQ8"/>
<dbReference type="STRING" id="290315.Clim_1988"/>
<dbReference type="KEGG" id="cli:Clim_1988"/>
<dbReference type="eggNOG" id="COG0781">
    <property type="taxonomic scope" value="Bacteria"/>
</dbReference>
<dbReference type="HOGENOM" id="CLU_087843_3_0_10"/>
<dbReference type="OrthoDB" id="9787568at2"/>
<dbReference type="Proteomes" id="UP000008841">
    <property type="component" value="Chromosome"/>
</dbReference>
<dbReference type="GO" id="GO:0005829">
    <property type="term" value="C:cytosol"/>
    <property type="evidence" value="ECO:0007669"/>
    <property type="project" value="TreeGrafter"/>
</dbReference>
<dbReference type="GO" id="GO:0003723">
    <property type="term" value="F:RNA binding"/>
    <property type="evidence" value="ECO:0007669"/>
    <property type="project" value="UniProtKB-UniRule"/>
</dbReference>
<dbReference type="GO" id="GO:0006353">
    <property type="term" value="P:DNA-templated transcription termination"/>
    <property type="evidence" value="ECO:0007669"/>
    <property type="project" value="UniProtKB-UniRule"/>
</dbReference>
<dbReference type="GO" id="GO:0031564">
    <property type="term" value="P:transcription antitermination"/>
    <property type="evidence" value="ECO:0007669"/>
    <property type="project" value="UniProtKB-KW"/>
</dbReference>
<dbReference type="CDD" id="cd00619">
    <property type="entry name" value="Terminator_NusB"/>
    <property type="match status" value="1"/>
</dbReference>
<dbReference type="Gene3D" id="1.10.940.10">
    <property type="entry name" value="NusB-like"/>
    <property type="match status" value="1"/>
</dbReference>
<dbReference type="HAMAP" id="MF_00073">
    <property type="entry name" value="NusB"/>
    <property type="match status" value="1"/>
</dbReference>
<dbReference type="InterPro" id="IPR035926">
    <property type="entry name" value="NusB-like_sf"/>
</dbReference>
<dbReference type="InterPro" id="IPR011605">
    <property type="entry name" value="NusB_fam"/>
</dbReference>
<dbReference type="InterPro" id="IPR006027">
    <property type="entry name" value="NusB_RsmB_TIM44"/>
</dbReference>
<dbReference type="NCBIfam" id="TIGR01951">
    <property type="entry name" value="nusB"/>
    <property type="match status" value="1"/>
</dbReference>
<dbReference type="PANTHER" id="PTHR11078:SF3">
    <property type="entry name" value="ANTITERMINATION NUSB DOMAIN-CONTAINING PROTEIN"/>
    <property type="match status" value="1"/>
</dbReference>
<dbReference type="PANTHER" id="PTHR11078">
    <property type="entry name" value="N UTILIZATION SUBSTANCE PROTEIN B-RELATED"/>
    <property type="match status" value="1"/>
</dbReference>
<dbReference type="Pfam" id="PF01029">
    <property type="entry name" value="NusB"/>
    <property type="match status" value="1"/>
</dbReference>
<dbReference type="SUPFAM" id="SSF48013">
    <property type="entry name" value="NusB-like"/>
    <property type="match status" value="1"/>
</dbReference>
<gene>
    <name evidence="1" type="primary">nusB</name>
    <name type="ordered locus">Clim_1988</name>
</gene>
<accession>B3EFQ8</accession>
<evidence type="ECO:0000255" key="1">
    <source>
        <dbReference type="HAMAP-Rule" id="MF_00073"/>
    </source>
</evidence>
<keyword id="KW-0694">RNA-binding</keyword>
<keyword id="KW-0804">Transcription</keyword>
<keyword id="KW-0889">Transcription antitermination</keyword>
<keyword id="KW-0805">Transcription regulation</keyword>
<organism>
    <name type="scientific">Chlorobium limicola (strain DSM 245 / NBRC 103803 / 6330)</name>
    <dbReference type="NCBI Taxonomy" id="290315"/>
    <lineage>
        <taxon>Bacteria</taxon>
        <taxon>Pseudomonadati</taxon>
        <taxon>Chlorobiota</taxon>
        <taxon>Chlorobiia</taxon>
        <taxon>Chlorobiales</taxon>
        <taxon>Chlorobiaceae</taxon>
        <taxon>Chlorobium/Pelodictyon group</taxon>
        <taxon>Chlorobium</taxon>
    </lineage>
</organism>
<name>NUSB_CHLL2</name>
<proteinExistence type="inferred from homology"/>
<reference key="1">
    <citation type="submission" date="2008-05" db="EMBL/GenBank/DDBJ databases">
        <title>Complete sequence of Chlorobium limicola DSM 245.</title>
        <authorList>
            <consortium name="US DOE Joint Genome Institute"/>
            <person name="Lucas S."/>
            <person name="Copeland A."/>
            <person name="Lapidus A."/>
            <person name="Glavina del Rio T."/>
            <person name="Dalin E."/>
            <person name="Tice H."/>
            <person name="Bruce D."/>
            <person name="Goodwin L."/>
            <person name="Pitluck S."/>
            <person name="Schmutz J."/>
            <person name="Larimer F."/>
            <person name="Land M."/>
            <person name="Hauser L."/>
            <person name="Kyrpides N."/>
            <person name="Ovchinnikova G."/>
            <person name="Zhao F."/>
            <person name="Li T."/>
            <person name="Liu Z."/>
            <person name="Overmann J."/>
            <person name="Bryant D.A."/>
            <person name="Richardson P."/>
        </authorList>
    </citation>
    <scope>NUCLEOTIDE SEQUENCE [LARGE SCALE GENOMIC DNA]</scope>
    <source>
        <strain>DSM 245 / NBRC 103803 / 6330</strain>
    </source>
</reference>
<feature type="chain" id="PRO_1000092535" description="Transcription antitermination protein NusB">
    <location>
        <begin position="1"/>
        <end position="164"/>
    </location>
</feature>